<reference key="1">
    <citation type="journal article" date="2006" name="Science">
        <title>Large-scale sequence analysis of avian influenza isolates.</title>
        <authorList>
            <person name="Obenauer J.C."/>
            <person name="Denson J."/>
            <person name="Mehta P.K."/>
            <person name="Su X."/>
            <person name="Mukatira S."/>
            <person name="Finkelstein D.B."/>
            <person name="Xu X."/>
            <person name="Wang J."/>
            <person name="Ma J."/>
            <person name="Fan Y."/>
            <person name="Rakestraw K.M."/>
            <person name="Webster R.G."/>
            <person name="Hoffmann E."/>
            <person name="Krauss S."/>
            <person name="Zheng J."/>
            <person name="Zhang Z."/>
            <person name="Naeve C.W."/>
        </authorList>
    </citation>
    <scope>NUCLEOTIDE SEQUENCE [GENOMIC RNA]</scope>
</reference>
<accession>P0DJR4</accession>
<organism>
    <name type="scientific">Influenza A virus (strain A/Gull/Minnesota/945/1980 H13N6)</name>
    <dbReference type="NCBI Taxonomy" id="385597"/>
    <lineage>
        <taxon>Viruses</taxon>
        <taxon>Riboviria</taxon>
        <taxon>Orthornavirae</taxon>
        <taxon>Negarnaviricota</taxon>
        <taxon>Polyploviricotina</taxon>
        <taxon>Insthoviricetes</taxon>
        <taxon>Articulavirales</taxon>
        <taxon>Orthomyxoviridae</taxon>
        <taxon>Alphainfluenzavirus</taxon>
        <taxon>Alphainfluenzavirus influenzae</taxon>
        <taxon>Influenza A virus</taxon>
    </lineage>
</organism>
<comment type="function">
    <text evidence="1 4">Plays a major role in the shutoff of the host protein expression by cleaving mRNAs probably via an endonuclease activity. This host shutoff allows the virus to escape from the host antiviral response (By similarity). Hijacks host RNA splicing machinery to selectively target host RNAs containing introns for destruction. This may explain the preferential degradation of RNAs that have undergone co- or post-transcriptional processing (By similarity).</text>
</comment>
<comment type="subcellular location">
    <subcellularLocation>
        <location evidence="4">Host cytoplasm</location>
    </subcellularLocation>
    <subcellularLocation>
        <location evidence="4">Host nucleus</location>
    </subcellularLocation>
</comment>
<comment type="alternative products">
    <event type="ribosomal frameshifting"/>
    <isoform>
        <id>P0DJR4-1</id>
        <name>PA-X</name>
        <sequence type="displayed"/>
    </isoform>
    <isoform>
        <id>Q20NV4-1</id>
        <name>PA</name>
        <sequence type="external"/>
    </isoform>
</comment>
<comment type="domain">
    <text evidence="1 4">The probable endonuclease active site in the N-terminus and the basic amino acid cluster in the C-terminus are important for the shutoff activity. The C-terminus acts as a nuclear localization signal (By similarity). The C-terminus is recruited to host protein complexes involved in nuclear Pol II RNA processing (By similarity).</text>
</comment>
<comment type="similarity">
    <text evidence="5">Belongs to the influenza viruses PA-X family.</text>
</comment>
<keyword id="KW-1132">Decay of host mRNAs by virus</keyword>
<keyword id="KW-1262">Eukaryotic host gene expression shutoff by virus</keyword>
<keyword id="KW-1035">Host cytoplasm</keyword>
<keyword id="KW-1190">Host gene expression shutoff by virus</keyword>
<keyword id="KW-1192">Host mRNA suppression by virus</keyword>
<keyword id="KW-1048">Host nucleus</keyword>
<keyword id="KW-0945">Host-virus interaction</keyword>
<keyword id="KW-0688">Ribosomal frameshifting</keyword>
<evidence type="ECO:0000250" key="1">
    <source>
        <dbReference type="UniProtKB" id="P0CK64"/>
    </source>
</evidence>
<evidence type="ECO:0000250" key="2">
    <source>
        <dbReference type="UniProtKB" id="P0CK68"/>
    </source>
</evidence>
<evidence type="ECO:0000250" key="3">
    <source>
        <dbReference type="UniProtKB" id="P0DJW8"/>
    </source>
</evidence>
<evidence type="ECO:0000250" key="4">
    <source>
        <dbReference type="UniProtKB" id="P0DXO5"/>
    </source>
</evidence>
<evidence type="ECO:0000305" key="5"/>
<organismHost>
    <name type="scientific">Aves</name>
    <dbReference type="NCBI Taxonomy" id="8782"/>
</organismHost>
<feature type="chain" id="PRO_0000419377" description="Protein PA-X">
    <location>
        <begin position="1"/>
        <end position="252"/>
    </location>
</feature>
<feature type="active site" evidence="2">
    <location>
        <position position="80"/>
    </location>
</feature>
<feature type="active site" evidence="2">
    <location>
        <position position="108"/>
    </location>
</feature>
<feature type="site" description="Important for efficient shutoff activity and nuclear localization" evidence="4">
    <location>
        <position position="195"/>
    </location>
</feature>
<feature type="site" description="Important for efficient shutoff activity and nuclear localization" evidence="4">
    <location>
        <position position="198"/>
    </location>
</feature>
<feature type="site" description="Important for efficient shutoff activity and nuclear localization" evidence="4">
    <location>
        <position position="199"/>
    </location>
</feature>
<feature type="site" description="Important for efficient shutoff activity" evidence="3">
    <location>
        <position position="202"/>
    </location>
</feature>
<feature type="site" description="Important for efficient shutoff activity" evidence="3">
    <location>
        <position position="203"/>
    </location>
</feature>
<feature type="site" description="Important for efficient shutoff activity" evidence="3">
    <location>
        <position position="206"/>
    </location>
</feature>
<protein>
    <recommendedName>
        <fullName>Protein PA-X</fullName>
    </recommendedName>
</protein>
<proteinExistence type="inferred from homology"/>
<name>PAX_I80AD</name>
<sequence length="252" mass="29419">MEDFVRQCFNPMIVELAEKAMKEYGEDPKIETNKFAAICTHLEVCFMYSDFHFIDERGESIIVESGDPNALLKHRFEIIEGRDRTMAWTVVNSICNTTGVEKPKFLPDLYDYKENRFIEIGVTRREVHIYYLEKANKIKSEKTHIHIFSFTGEEMATKADYTLDEESRARIKTRLFTIRQEMASRGLWDSFVSPREAKRQLKKDLKLQEPCADSQTKVSHRTSPALKTLEPMWMDSNRTAALRASFLKCPKK</sequence>
<dbReference type="EMBL" id="CY005863">
    <property type="status" value="NOT_ANNOTATED_CDS"/>
    <property type="molecule type" value="Genomic_RNA"/>
</dbReference>
<dbReference type="SMR" id="P0DJR4"/>
<dbReference type="Proteomes" id="UP000008581">
    <property type="component" value="Genome"/>
</dbReference>
<dbReference type="GO" id="GO:0003723">
    <property type="term" value="F:RNA binding"/>
    <property type="evidence" value="ECO:0007669"/>
    <property type="project" value="InterPro"/>
</dbReference>
<dbReference type="GO" id="GO:0039694">
    <property type="term" value="P:viral RNA genome replication"/>
    <property type="evidence" value="ECO:0007669"/>
    <property type="project" value="InterPro"/>
</dbReference>
<dbReference type="GO" id="GO:0075523">
    <property type="term" value="P:viral translational frameshifting"/>
    <property type="evidence" value="ECO:0007669"/>
    <property type="project" value="UniProtKB-KW"/>
</dbReference>
<dbReference type="FunFam" id="3.40.91.90:FF:000001">
    <property type="entry name" value="Polymerase acidic protein"/>
    <property type="match status" value="1"/>
</dbReference>
<dbReference type="Gene3D" id="3.40.91.90">
    <property type="entry name" value="Influenza RNA-dependent RNA polymerase subunit PA, endonuclease domain"/>
    <property type="match status" value="1"/>
</dbReference>
<dbReference type="InterPro" id="IPR001009">
    <property type="entry name" value="PA/PA-X"/>
</dbReference>
<dbReference type="InterPro" id="IPR038372">
    <property type="entry name" value="PA/PA-X_sf"/>
</dbReference>
<dbReference type="Pfam" id="PF00603">
    <property type="entry name" value="Flu_PA"/>
    <property type="match status" value="1"/>
</dbReference>
<gene>
    <name type="primary">PA</name>
</gene>